<proteinExistence type="inferred from homology"/>
<organism>
    <name type="scientific">Granulibacter bethesdensis (strain ATCC BAA-1260 / CGDNIH1)</name>
    <dbReference type="NCBI Taxonomy" id="391165"/>
    <lineage>
        <taxon>Bacteria</taxon>
        <taxon>Pseudomonadati</taxon>
        <taxon>Pseudomonadota</taxon>
        <taxon>Alphaproteobacteria</taxon>
        <taxon>Acetobacterales</taxon>
        <taxon>Acetobacteraceae</taxon>
        <taxon>Granulibacter</taxon>
    </lineage>
</organism>
<dbReference type="EC" id="6.1.1.14" evidence="1"/>
<dbReference type="EMBL" id="CP000394">
    <property type="protein sequence ID" value="ABI63000.1"/>
    <property type="molecule type" value="Genomic_DNA"/>
</dbReference>
<dbReference type="RefSeq" id="WP_011632802.1">
    <property type="nucleotide sequence ID" value="NC_008343.2"/>
</dbReference>
<dbReference type="SMR" id="Q0BQA2"/>
<dbReference type="STRING" id="391165.GbCGDNIH1_2102"/>
<dbReference type="KEGG" id="gbe:GbCGDNIH1_2102"/>
<dbReference type="eggNOG" id="COG0752">
    <property type="taxonomic scope" value="Bacteria"/>
</dbReference>
<dbReference type="HOGENOM" id="CLU_057066_1_0_5"/>
<dbReference type="OrthoDB" id="9802183at2"/>
<dbReference type="Proteomes" id="UP000001963">
    <property type="component" value="Chromosome"/>
</dbReference>
<dbReference type="GO" id="GO:0005829">
    <property type="term" value="C:cytosol"/>
    <property type="evidence" value="ECO:0007669"/>
    <property type="project" value="TreeGrafter"/>
</dbReference>
<dbReference type="GO" id="GO:0005524">
    <property type="term" value="F:ATP binding"/>
    <property type="evidence" value="ECO:0007669"/>
    <property type="project" value="UniProtKB-UniRule"/>
</dbReference>
<dbReference type="GO" id="GO:0004820">
    <property type="term" value="F:glycine-tRNA ligase activity"/>
    <property type="evidence" value="ECO:0007669"/>
    <property type="project" value="UniProtKB-UniRule"/>
</dbReference>
<dbReference type="GO" id="GO:0006426">
    <property type="term" value="P:glycyl-tRNA aminoacylation"/>
    <property type="evidence" value="ECO:0007669"/>
    <property type="project" value="UniProtKB-UniRule"/>
</dbReference>
<dbReference type="CDD" id="cd00733">
    <property type="entry name" value="GlyRS_alpha_core"/>
    <property type="match status" value="1"/>
</dbReference>
<dbReference type="FunFam" id="3.30.930.10:FF:000006">
    <property type="entry name" value="Glycine--tRNA ligase alpha subunit"/>
    <property type="match status" value="1"/>
</dbReference>
<dbReference type="Gene3D" id="3.30.930.10">
    <property type="entry name" value="Bira Bifunctional Protein, Domain 2"/>
    <property type="match status" value="1"/>
</dbReference>
<dbReference type="Gene3D" id="1.20.58.180">
    <property type="entry name" value="Class II aaRS and biotin synthetases, domain 2"/>
    <property type="match status" value="1"/>
</dbReference>
<dbReference type="HAMAP" id="MF_00254">
    <property type="entry name" value="Gly_tRNA_synth_alpha"/>
    <property type="match status" value="1"/>
</dbReference>
<dbReference type="InterPro" id="IPR045864">
    <property type="entry name" value="aa-tRNA-synth_II/BPL/LPL"/>
</dbReference>
<dbReference type="InterPro" id="IPR006194">
    <property type="entry name" value="Gly-tRNA-synth_heterodimer"/>
</dbReference>
<dbReference type="InterPro" id="IPR002310">
    <property type="entry name" value="Gly-tRNA_ligase_asu"/>
</dbReference>
<dbReference type="NCBIfam" id="TIGR00388">
    <property type="entry name" value="glyQ"/>
    <property type="match status" value="1"/>
</dbReference>
<dbReference type="NCBIfam" id="NF006827">
    <property type="entry name" value="PRK09348.1"/>
    <property type="match status" value="1"/>
</dbReference>
<dbReference type="PANTHER" id="PTHR30075:SF2">
    <property type="entry name" value="GLYCINE--TRNA LIGASE, CHLOROPLASTIC_MITOCHONDRIAL 2"/>
    <property type="match status" value="1"/>
</dbReference>
<dbReference type="PANTHER" id="PTHR30075">
    <property type="entry name" value="GLYCYL-TRNA SYNTHETASE"/>
    <property type="match status" value="1"/>
</dbReference>
<dbReference type="Pfam" id="PF02091">
    <property type="entry name" value="tRNA-synt_2e"/>
    <property type="match status" value="1"/>
</dbReference>
<dbReference type="PRINTS" id="PR01044">
    <property type="entry name" value="TRNASYNTHGA"/>
</dbReference>
<dbReference type="SUPFAM" id="SSF55681">
    <property type="entry name" value="Class II aaRS and biotin synthetases"/>
    <property type="match status" value="1"/>
</dbReference>
<dbReference type="PROSITE" id="PS50861">
    <property type="entry name" value="AA_TRNA_LIGASE_II_GLYAB"/>
    <property type="match status" value="1"/>
</dbReference>
<name>SYGA_GRABC</name>
<reference key="1">
    <citation type="journal article" date="2007" name="J. Bacteriol.">
        <title>Genome sequence analysis of the emerging human pathogenic acetic acid bacterium Granulibacter bethesdensis.</title>
        <authorList>
            <person name="Greenberg D.E."/>
            <person name="Porcella S.F."/>
            <person name="Zelazny A.M."/>
            <person name="Virtaneva K."/>
            <person name="Sturdevant D.E."/>
            <person name="Kupko J.J. III"/>
            <person name="Barbian K.D."/>
            <person name="Babar A."/>
            <person name="Dorward D.W."/>
            <person name="Holland S.M."/>
        </authorList>
    </citation>
    <scope>NUCLEOTIDE SEQUENCE [LARGE SCALE GENOMIC DNA]</scope>
    <source>
        <strain>ATCC BAA-1260 / CGDNIH1</strain>
    </source>
</reference>
<keyword id="KW-0030">Aminoacyl-tRNA synthetase</keyword>
<keyword id="KW-0067">ATP-binding</keyword>
<keyword id="KW-0963">Cytoplasm</keyword>
<keyword id="KW-0436">Ligase</keyword>
<keyword id="KW-0547">Nucleotide-binding</keyword>
<keyword id="KW-0648">Protein biosynthesis</keyword>
<keyword id="KW-1185">Reference proteome</keyword>
<evidence type="ECO:0000255" key="1">
    <source>
        <dbReference type="HAMAP-Rule" id="MF_00254"/>
    </source>
</evidence>
<protein>
    <recommendedName>
        <fullName evidence="1">Glycine--tRNA ligase alpha subunit</fullName>
        <ecNumber evidence="1">6.1.1.14</ecNumber>
    </recommendedName>
    <alternativeName>
        <fullName evidence="1">Glycyl-tRNA synthetase alpha subunit</fullName>
        <shortName evidence="1">GlyRS</shortName>
    </alternativeName>
</protein>
<accession>Q0BQA2</accession>
<feature type="chain" id="PRO_1000101198" description="Glycine--tRNA ligase alpha subunit">
    <location>
        <begin position="1"/>
        <end position="285"/>
    </location>
</feature>
<comment type="catalytic activity">
    <reaction evidence="1">
        <text>tRNA(Gly) + glycine + ATP = glycyl-tRNA(Gly) + AMP + diphosphate</text>
        <dbReference type="Rhea" id="RHEA:16013"/>
        <dbReference type="Rhea" id="RHEA-COMP:9664"/>
        <dbReference type="Rhea" id="RHEA-COMP:9683"/>
        <dbReference type="ChEBI" id="CHEBI:30616"/>
        <dbReference type="ChEBI" id="CHEBI:33019"/>
        <dbReference type="ChEBI" id="CHEBI:57305"/>
        <dbReference type="ChEBI" id="CHEBI:78442"/>
        <dbReference type="ChEBI" id="CHEBI:78522"/>
        <dbReference type="ChEBI" id="CHEBI:456215"/>
        <dbReference type="EC" id="6.1.1.14"/>
    </reaction>
</comment>
<comment type="subunit">
    <text evidence="1">Tetramer of two alpha and two beta subunits.</text>
</comment>
<comment type="subcellular location">
    <subcellularLocation>
        <location evidence="1">Cytoplasm</location>
    </subcellularLocation>
</comment>
<comment type="similarity">
    <text evidence="1">Belongs to the class-II aminoacyl-tRNA synthetase family.</text>
</comment>
<gene>
    <name evidence="1" type="primary">glyQ</name>
    <name type="ordered locus">GbCGDNIH1_2102</name>
</gene>
<sequence length="285" mass="32100">MPDKPSFQDLILRLHAFWSKAGCVILQPYDVEMGAGTFHPATTLRSLGRKPWRAAYVQPSRRPTDGRYGENPNRLQHYYQYQVIMKPSPETAQSMLLDSYRAIGIDPALHDIRFVEDDWESPTLGAWGLGWEVWCDGMEVGQFTYFQQVGGIPVDLPSFEMTYGLERLAMYVQDVENVYDLDFNGQGVTYGDVFLRAEREYSAHNFEHANTEMLSRHFIDAEKECAALVGQGLALPAYDQCIKASHLFNLLDARGVISVTERAAYIARVRSLAKSCAEAWLAGGG</sequence>